<comment type="function">
    <text evidence="1">RNA chaperone with significant RNA binding, RNA strand exchange and RNA duplexing activities. May regulate ProP activity through an RNA-based, post-transcriptional mechanism.</text>
</comment>
<comment type="subcellular location">
    <subcellularLocation>
        <location evidence="1">Cytoplasm</location>
    </subcellularLocation>
</comment>
<comment type="similarity">
    <text evidence="1">Belongs to the ProQ family.</text>
</comment>
<reference key="1">
    <citation type="submission" date="2008-05" db="EMBL/GenBank/DDBJ databases">
        <title>Complete sequence of Shigella boydii serotype 18 strain BS512.</title>
        <authorList>
            <person name="Rasko D.A."/>
            <person name="Rosovitz M."/>
            <person name="Maurelli A.T."/>
            <person name="Myers G."/>
            <person name="Seshadri R."/>
            <person name="Cer R."/>
            <person name="Jiang L."/>
            <person name="Ravel J."/>
            <person name="Sebastian Y."/>
        </authorList>
    </citation>
    <scope>NUCLEOTIDE SEQUENCE [LARGE SCALE GENOMIC DNA]</scope>
    <source>
        <strain>CDC 3083-94 / BS512</strain>
    </source>
</reference>
<accession>B2U473</accession>
<evidence type="ECO:0000255" key="1">
    <source>
        <dbReference type="HAMAP-Rule" id="MF_00749"/>
    </source>
</evidence>
<evidence type="ECO:0000256" key="2">
    <source>
        <dbReference type="SAM" id="MobiDB-lite"/>
    </source>
</evidence>
<name>PROQ_SHIB3</name>
<gene>
    <name evidence="1" type="primary">proQ</name>
    <name type="ordered locus">SbBS512_E2099</name>
</gene>
<proteinExistence type="inferred from homology"/>
<feature type="chain" id="PRO_1000133310" description="RNA chaperone ProQ">
    <location>
        <begin position="1"/>
        <end position="232"/>
    </location>
</feature>
<feature type="region of interest" description="Disordered" evidence="2">
    <location>
        <begin position="105"/>
        <end position="182"/>
    </location>
</feature>
<feature type="compositionally biased region" description="Basic and acidic residues" evidence="2">
    <location>
        <begin position="117"/>
        <end position="136"/>
    </location>
</feature>
<feature type="compositionally biased region" description="Basic residues" evidence="2">
    <location>
        <begin position="137"/>
        <end position="146"/>
    </location>
</feature>
<feature type="compositionally biased region" description="Basic and acidic residues" evidence="2">
    <location>
        <begin position="147"/>
        <end position="177"/>
    </location>
</feature>
<sequence>MENQPKLNSSKEVIAFLAERFPHCFSAEGEARPLKIGIFQDLVDRVAGEMNLSKTQLRSALRLYTSSWRYLYGVKPGTTRVDLDGNPCGELDEQHVEHARKQLEEAKARVQAQRAEQQAKKREAAAAAGEKEDAPRRERKPRPTTPRRKEGAERKPRAQKPVEKAPKTVKAPREEQHTPVSDISALTVGQALKVKAGQNAMDATVLEITKDGVRVQLNSGMSLIVRAEHLVF</sequence>
<dbReference type="EMBL" id="CP001063">
    <property type="protein sequence ID" value="ACD08259.1"/>
    <property type="molecule type" value="Genomic_DNA"/>
</dbReference>
<dbReference type="RefSeq" id="WP_000431387.1">
    <property type="nucleotide sequence ID" value="NC_010658.1"/>
</dbReference>
<dbReference type="SMR" id="B2U473"/>
<dbReference type="STRING" id="344609.SbBS512_E2099"/>
<dbReference type="KEGG" id="sbc:SbBS512_E2099"/>
<dbReference type="HOGENOM" id="CLU_113254_0_0_6"/>
<dbReference type="Proteomes" id="UP000001030">
    <property type="component" value="Chromosome"/>
</dbReference>
<dbReference type="GO" id="GO:0005829">
    <property type="term" value="C:cytosol"/>
    <property type="evidence" value="ECO:0007669"/>
    <property type="project" value="TreeGrafter"/>
</dbReference>
<dbReference type="GO" id="GO:0033592">
    <property type="term" value="F:RNA strand annealing activity"/>
    <property type="evidence" value="ECO:0007669"/>
    <property type="project" value="UniProtKB-UniRule"/>
</dbReference>
<dbReference type="GO" id="GO:0034057">
    <property type="term" value="F:RNA strand-exchange activity"/>
    <property type="evidence" value="ECO:0007669"/>
    <property type="project" value="UniProtKB-UniRule"/>
</dbReference>
<dbReference type="GO" id="GO:0010608">
    <property type="term" value="P:post-transcriptional regulation of gene expression"/>
    <property type="evidence" value="ECO:0007669"/>
    <property type="project" value="InterPro"/>
</dbReference>
<dbReference type="FunFam" id="1.10.1710.10:FF:000001">
    <property type="entry name" value="RNA chaperone ProQ"/>
    <property type="match status" value="1"/>
</dbReference>
<dbReference type="Gene3D" id="1.10.1710.10">
    <property type="entry name" value="ProQ/FinO domain"/>
    <property type="match status" value="1"/>
</dbReference>
<dbReference type="HAMAP" id="MF_00749">
    <property type="entry name" value="ProQ"/>
    <property type="match status" value="1"/>
</dbReference>
<dbReference type="InterPro" id="IPR023529">
    <property type="entry name" value="ProQ"/>
</dbReference>
<dbReference type="InterPro" id="IPR016103">
    <property type="entry name" value="ProQ/FinO"/>
</dbReference>
<dbReference type="InterPro" id="IPR036442">
    <property type="entry name" value="ProQ/FinO_sf"/>
</dbReference>
<dbReference type="InterPro" id="IPR035236">
    <property type="entry name" value="ProQ_C"/>
</dbReference>
<dbReference type="NCBIfam" id="NF003434">
    <property type="entry name" value="PRK04950.1"/>
    <property type="match status" value="1"/>
</dbReference>
<dbReference type="PANTHER" id="PTHR38106">
    <property type="entry name" value="RNA CHAPERONE PROQ"/>
    <property type="match status" value="1"/>
</dbReference>
<dbReference type="PANTHER" id="PTHR38106:SF1">
    <property type="entry name" value="RNA CHAPERONE PROQ"/>
    <property type="match status" value="1"/>
</dbReference>
<dbReference type="Pfam" id="PF04352">
    <property type="entry name" value="ProQ"/>
    <property type="match status" value="1"/>
</dbReference>
<dbReference type="Pfam" id="PF17516">
    <property type="entry name" value="ProQ_C"/>
    <property type="match status" value="1"/>
</dbReference>
<dbReference type="SMART" id="SM00945">
    <property type="entry name" value="ProQ"/>
    <property type="match status" value="1"/>
</dbReference>
<dbReference type="SUPFAM" id="SSF48657">
    <property type="entry name" value="FinO-like"/>
    <property type="match status" value="1"/>
</dbReference>
<organism>
    <name type="scientific">Shigella boydii serotype 18 (strain CDC 3083-94 / BS512)</name>
    <dbReference type="NCBI Taxonomy" id="344609"/>
    <lineage>
        <taxon>Bacteria</taxon>
        <taxon>Pseudomonadati</taxon>
        <taxon>Pseudomonadota</taxon>
        <taxon>Gammaproteobacteria</taxon>
        <taxon>Enterobacterales</taxon>
        <taxon>Enterobacteriaceae</taxon>
        <taxon>Shigella</taxon>
    </lineage>
</organism>
<keyword id="KW-0143">Chaperone</keyword>
<keyword id="KW-0963">Cytoplasm</keyword>
<keyword id="KW-1185">Reference proteome</keyword>
<keyword id="KW-0694">RNA-binding</keyword>
<protein>
    <recommendedName>
        <fullName evidence="1">RNA chaperone ProQ</fullName>
    </recommendedName>
</protein>